<protein>
    <recommendedName>
        <fullName evidence="1">Eukaryotic translation initiation factor 3 subunit J</fullName>
        <shortName evidence="1">eIF3j</shortName>
    </recommendedName>
    <alternativeName>
        <fullName>Eukaryotic translation initiation factor 3 30 kDa subunit</fullName>
        <shortName>eIF-3 30 kDa</shortName>
    </alternativeName>
</protein>
<keyword id="KW-0963">Cytoplasm</keyword>
<keyword id="KW-0396">Initiation factor</keyword>
<keyword id="KW-0648">Protein biosynthesis</keyword>
<keyword id="KW-1185">Reference proteome</keyword>
<dbReference type="EMBL" id="CR382132">
    <property type="protein sequence ID" value="CAG78857.1"/>
    <property type="molecule type" value="Genomic_DNA"/>
</dbReference>
<dbReference type="RefSeq" id="XP_506044.1">
    <property type="nucleotide sequence ID" value="XM_506044.1"/>
</dbReference>
<dbReference type="FunCoup" id="Q6BZW8">
    <property type="interactions" value="106"/>
</dbReference>
<dbReference type="STRING" id="284591.Q6BZW8"/>
<dbReference type="EnsemblFungi" id="CAG78857">
    <property type="protein sequence ID" value="CAG78857"/>
    <property type="gene ID" value="YALI0_F30305g"/>
</dbReference>
<dbReference type="KEGG" id="yli:2908554"/>
<dbReference type="VEuPathDB" id="FungiDB:YALI0_F30305g"/>
<dbReference type="HOGENOM" id="CLU_085412_0_0_1"/>
<dbReference type="InParanoid" id="Q6BZW8"/>
<dbReference type="OMA" id="KPHYALW"/>
<dbReference type="OrthoDB" id="126490at4891"/>
<dbReference type="Proteomes" id="UP000001300">
    <property type="component" value="Chromosome F"/>
</dbReference>
<dbReference type="GO" id="GO:0016282">
    <property type="term" value="C:eukaryotic 43S preinitiation complex"/>
    <property type="evidence" value="ECO:0007669"/>
    <property type="project" value="UniProtKB-UniRule"/>
</dbReference>
<dbReference type="GO" id="GO:0033290">
    <property type="term" value="C:eukaryotic 48S preinitiation complex"/>
    <property type="evidence" value="ECO:0007669"/>
    <property type="project" value="UniProtKB-UniRule"/>
</dbReference>
<dbReference type="GO" id="GO:0005852">
    <property type="term" value="C:eukaryotic translation initiation factor 3 complex"/>
    <property type="evidence" value="ECO:0000318"/>
    <property type="project" value="GO_Central"/>
</dbReference>
<dbReference type="GO" id="GO:0003743">
    <property type="term" value="F:translation initiation factor activity"/>
    <property type="evidence" value="ECO:0007669"/>
    <property type="project" value="UniProtKB-UniRule"/>
</dbReference>
<dbReference type="GO" id="GO:0001732">
    <property type="term" value="P:formation of cytoplasmic translation initiation complex"/>
    <property type="evidence" value="ECO:0007669"/>
    <property type="project" value="UniProtKB-UniRule"/>
</dbReference>
<dbReference type="Gene3D" id="1.10.246.60">
    <property type="entry name" value="Eukaryotic translation initiation factor 3 like domains"/>
    <property type="match status" value="1"/>
</dbReference>
<dbReference type="HAMAP" id="MF_03009">
    <property type="entry name" value="eIF3j"/>
    <property type="match status" value="1"/>
</dbReference>
<dbReference type="InterPro" id="IPR023194">
    <property type="entry name" value="eIF3-like_dom_sf"/>
</dbReference>
<dbReference type="InterPro" id="IPR013906">
    <property type="entry name" value="eIF3j"/>
</dbReference>
<dbReference type="PANTHER" id="PTHR21681">
    <property type="entry name" value="EUKARYOTIC TRANSLATION INITIATION FACTOR 3 SUBUNIT J"/>
    <property type="match status" value="1"/>
</dbReference>
<dbReference type="PANTHER" id="PTHR21681:SF0">
    <property type="entry name" value="EUKARYOTIC TRANSLATION INITIATION FACTOR 3 SUBUNIT J"/>
    <property type="match status" value="1"/>
</dbReference>
<dbReference type="Pfam" id="PF08597">
    <property type="entry name" value="eIF3_subunit"/>
    <property type="match status" value="1"/>
</dbReference>
<proteinExistence type="inferred from homology"/>
<evidence type="ECO:0000255" key="1">
    <source>
        <dbReference type="HAMAP-Rule" id="MF_03009"/>
    </source>
</evidence>
<evidence type="ECO:0000256" key="2">
    <source>
        <dbReference type="SAM" id="MobiDB-lite"/>
    </source>
</evidence>
<name>EIF3J_YARLI</name>
<gene>
    <name evidence="1" type="primary">HCR1</name>
    <name type="ordered locus">YALI0F30305g</name>
</gene>
<sequence length="242" mass="26503">MASWDDEDFEVPAAATPAVPANWDDDEEEDVMDSWDAEEPTKAPGPKTTVAAPKKAQRQQIAKIEREMAAMKLKPEDASTKRDRQRQAELDSDMMNASELFGGTGGIADSAAKAEAAPAPAAPAAPMKLSDLAIFHPKEKKDFTNLKETLAPILTDLNKTSPLAYPDFAITFTKALAEPLKVEQLRKLISTLNAYQNEKIREEKAARGKKKKPGLAAASAKINDDKDTSTFNDNFDDFDDFM</sequence>
<reference key="1">
    <citation type="journal article" date="2004" name="Nature">
        <title>Genome evolution in yeasts.</title>
        <authorList>
            <person name="Dujon B."/>
            <person name="Sherman D."/>
            <person name="Fischer G."/>
            <person name="Durrens P."/>
            <person name="Casaregola S."/>
            <person name="Lafontaine I."/>
            <person name="de Montigny J."/>
            <person name="Marck C."/>
            <person name="Neuveglise C."/>
            <person name="Talla E."/>
            <person name="Goffard N."/>
            <person name="Frangeul L."/>
            <person name="Aigle M."/>
            <person name="Anthouard V."/>
            <person name="Babour A."/>
            <person name="Barbe V."/>
            <person name="Barnay S."/>
            <person name="Blanchin S."/>
            <person name="Beckerich J.-M."/>
            <person name="Beyne E."/>
            <person name="Bleykasten C."/>
            <person name="Boisrame A."/>
            <person name="Boyer J."/>
            <person name="Cattolico L."/>
            <person name="Confanioleri F."/>
            <person name="de Daruvar A."/>
            <person name="Despons L."/>
            <person name="Fabre E."/>
            <person name="Fairhead C."/>
            <person name="Ferry-Dumazet H."/>
            <person name="Groppi A."/>
            <person name="Hantraye F."/>
            <person name="Hennequin C."/>
            <person name="Jauniaux N."/>
            <person name="Joyet P."/>
            <person name="Kachouri R."/>
            <person name="Kerrest A."/>
            <person name="Koszul R."/>
            <person name="Lemaire M."/>
            <person name="Lesur I."/>
            <person name="Ma L."/>
            <person name="Muller H."/>
            <person name="Nicaud J.-M."/>
            <person name="Nikolski M."/>
            <person name="Oztas S."/>
            <person name="Ozier-Kalogeropoulos O."/>
            <person name="Pellenz S."/>
            <person name="Potier S."/>
            <person name="Richard G.-F."/>
            <person name="Straub M.-L."/>
            <person name="Suleau A."/>
            <person name="Swennen D."/>
            <person name="Tekaia F."/>
            <person name="Wesolowski-Louvel M."/>
            <person name="Westhof E."/>
            <person name="Wirth B."/>
            <person name="Zeniou-Meyer M."/>
            <person name="Zivanovic Y."/>
            <person name="Bolotin-Fukuhara M."/>
            <person name="Thierry A."/>
            <person name="Bouchier C."/>
            <person name="Caudron B."/>
            <person name="Scarpelli C."/>
            <person name="Gaillardin C."/>
            <person name="Weissenbach J."/>
            <person name="Wincker P."/>
            <person name="Souciet J.-L."/>
        </authorList>
    </citation>
    <scope>NUCLEOTIDE SEQUENCE [LARGE SCALE GENOMIC DNA]</scope>
    <source>
        <strain>CLIB 122 / E 150</strain>
    </source>
</reference>
<organism>
    <name type="scientific">Yarrowia lipolytica (strain CLIB 122 / E 150)</name>
    <name type="common">Yeast</name>
    <name type="synonym">Candida lipolytica</name>
    <dbReference type="NCBI Taxonomy" id="284591"/>
    <lineage>
        <taxon>Eukaryota</taxon>
        <taxon>Fungi</taxon>
        <taxon>Dikarya</taxon>
        <taxon>Ascomycota</taxon>
        <taxon>Saccharomycotina</taxon>
        <taxon>Dipodascomycetes</taxon>
        <taxon>Dipodascales</taxon>
        <taxon>Dipodascales incertae sedis</taxon>
        <taxon>Yarrowia</taxon>
    </lineage>
</organism>
<feature type="chain" id="PRO_0000365160" description="Eukaryotic translation initiation factor 3 subunit J">
    <location>
        <begin position="1"/>
        <end position="242"/>
    </location>
</feature>
<feature type="region of interest" description="Disordered" evidence="2">
    <location>
        <begin position="1"/>
        <end position="58"/>
    </location>
</feature>
<feature type="region of interest" description="Disordered" evidence="2">
    <location>
        <begin position="71"/>
        <end position="97"/>
    </location>
</feature>
<feature type="region of interest" description="Disordered" evidence="2">
    <location>
        <begin position="201"/>
        <end position="242"/>
    </location>
</feature>
<feature type="compositionally biased region" description="Acidic residues" evidence="2">
    <location>
        <begin position="1"/>
        <end position="10"/>
    </location>
</feature>
<feature type="compositionally biased region" description="Low complexity" evidence="2">
    <location>
        <begin position="11"/>
        <end position="21"/>
    </location>
</feature>
<feature type="compositionally biased region" description="Acidic residues" evidence="2">
    <location>
        <begin position="23"/>
        <end position="38"/>
    </location>
</feature>
<feature type="compositionally biased region" description="Basic and acidic residues" evidence="2">
    <location>
        <begin position="71"/>
        <end position="89"/>
    </location>
</feature>
<comment type="function">
    <text evidence="1">Component of the eukaryotic translation initiation factor 3 (eIF-3) complex, which is involved in protein synthesis of a specialized repertoire of mRNAs and, together with other initiation factors, stimulates binding of mRNA and methionyl-tRNAi to the 40S ribosome. The eIF-3 complex specifically targets and initiates translation of a subset of mRNAs involved in cell proliferation.</text>
</comment>
<comment type="subunit">
    <text evidence="1">Component of the eukaryotic translation initiation factor 3 (eIF-3) complex.</text>
</comment>
<comment type="subcellular location">
    <subcellularLocation>
        <location evidence="1">Cytoplasm</location>
    </subcellularLocation>
</comment>
<comment type="similarity">
    <text evidence="1">Belongs to the eIF-3 subunit J family.</text>
</comment>
<accession>Q6BZW8</accession>